<comment type="function">
    <text evidence="1">Enhances the ribosomal termination-reinitiation event leading to the translation of major open reading frames on the polycistronic viral RNAs.</text>
</comment>
<comment type="subcellular location">
    <subcellularLocation>
        <location>Host cytoplasm</location>
    </subcellularLocation>
    <text>Found in cytoplasmic occlusion bodies.</text>
</comment>
<comment type="miscellaneous">
    <text>The inclusion bodies are the site of viral DNA synthesis, virion assembly and accumulation in the infected cell.</text>
</comment>
<comment type="similarity">
    <text evidence="3">Belongs to the caulimoviridae viroplasmin family.</text>
</comment>
<protein>
    <recommendedName>
        <fullName>Transactivator/viroplasmin protein</fullName>
        <shortName>Tav</shortName>
    </recommendedName>
    <alternativeName>
        <fullName>Inclusion body matrix protein</fullName>
    </alternativeName>
</protein>
<organismHost>
    <name type="scientific">Arabidopsis thaliana</name>
    <name type="common">Mouse-ear cress</name>
    <dbReference type="NCBI Taxonomy" id="3702"/>
</organismHost>
<organismHost>
    <name type="scientific">Brassica</name>
    <dbReference type="NCBI Taxonomy" id="3705"/>
</organismHost>
<organismHost>
    <name type="scientific">Raphanus</name>
    <dbReference type="NCBI Taxonomy" id="3725"/>
</organismHost>
<feature type="chain" id="PRO_0000222045" description="Transactivator/viroplasmin protein">
    <location>
        <begin position="1"/>
        <end position="520"/>
    </location>
</feature>
<feature type="region of interest" description="Disordered" evidence="2">
    <location>
        <begin position="103"/>
        <end position="126"/>
    </location>
</feature>
<feature type="region of interest" description="Disordered" evidence="2">
    <location>
        <begin position="487"/>
        <end position="520"/>
    </location>
</feature>
<evidence type="ECO:0000250" key="1">
    <source>
        <dbReference type="UniProtKB" id="P03558"/>
    </source>
</evidence>
<evidence type="ECO:0000256" key="2">
    <source>
        <dbReference type="SAM" id="MobiDB-lite"/>
    </source>
</evidence>
<evidence type="ECO:0000305" key="3"/>
<keyword id="KW-1035">Host cytoplasm</keyword>
<keyword id="KW-1185">Reference proteome</keyword>
<keyword id="KW-0810">Translation regulation</keyword>
<sequence length="520" mass="57992">MENIEKLLMQEKILMLELDLVRAKISLARANGSSQQGDLSLHRETPEKEEAVHSALATFTPSQVKAIPEQTAPGKESTNPLMANILPKDMNSVQTEIRPVKPSDFLRPHQGIPIPPKPEPSSSVAPLRDESGIQHPHTNYYVVYNGPHAGIYDDWGCTKAATNGVPGVAHKKFATITEARAAADAYTTSQQTDRLNFIPKGEAQLKPKSFAKALTSPPKQKAHWLMLGTKKPSSDPAPKEISFAPEITMDDFLYLYDLVRKFDGEGDDTMFTTDNEKISLFNFRKNANPQMVREAYAAGLIKTIYPSNNLQEIKYLPKKVKDAVKRFRTNCIKNTEKDIFLKIRSTIPVWTIQGLLHKPRQVIEIGVSKKVVPTESKAMESKIQIEDLTELAVKTGEQFIQSLLRLNDKKKIFVNMVEHDTLVYSKNIKDTVSEDQRAIETFQQRVISGNLLGFHCPAICHFIVKIVEKEGGSYKCHHCDKGKAIVEDASADSGPKDGPPPTRSIVEKEDVPTTSSKQVD</sequence>
<accession>P03559</accession>
<proteinExistence type="inferred from homology"/>
<gene>
    <name type="ORF">ORF VI</name>
</gene>
<organism>
    <name type="scientific">Cauliflower mosaic virus (strain Strasbourg)</name>
    <name type="common">CaMV</name>
    <dbReference type="NCBI Taxonomy" id="10648"/>
    <lineage>
        <taxon>Viruses</taxon>
        <taxon>Riboviria</taxon>
        <taxon>Pararnavirae</taxon>
        <taxon>Artverviricota</taxon>
        <taxon>Revtraviricetes</taxon>
        <taxon>Ortervirales</taxon>
        <taxon>Caulimoviridae</taxon>
        <taxon>Caulimovirus</taxon>
        <taxon>Caulimovirus tessellobrassicae</taxon>
    </lineage>
</organism>
<dbReference type="EMBL" id="V00141">
    <property type="protein sequence ID" value="CAA23461.1"/>
    <property type="molecule type" value="Genomic_DNA"/>
</dbReference>
<dbReference type="PIR" id="A04162">
    <property type="entry name" value="QQCV6S"/>
</dbReference>
<dbReference type="RefSeq" id="NP_056729.1">
    <property type="nucleotide sequence ID" value="NC_001497.1"/>
</dbReference>
<dbReference type="SMR" id="P03559"/>
<dbReference type="KEGG" id="vg:1489545"/>
<dbReference type="Proteomes" id="UP000002501">
    <property type="component" value="Genome"/>
</dbReference>
<dbReference type="GO" id="GO:0030430">
    <property type="term" value="C:host cell cytoplasm"/>
    <property type="evidence" value="ECO:0007669"/>
    <property type="project" value="UniProtKB-SubCell"/>
</dbReference>
<dbReference type="GO" id="GO:0006417">
    <property type="term" value="P:regulation of translation"/>
    <property type="evidence" value="ECO:0007669"/>
    <property type="project" value="UniProtKB-KW"/>
</dbReference>
<dbReference type="FunFam" id="3.40.970.10:FF:000003">
    <property type="entry name" value="Transactivator/viroplasmin protein"/>
    <property type="match status" value="1"/>
</dbReference>
<dbReference type="Gene3D" id="3.40.970.10">
    <property type="entry name" value="Ribonuclease H1, N-terminal domain"/>
    <property type="match status" value="1"/>
</dbReference>
<dbReference type="InterPro" id="IPR009027">
    <property type="entry name" value="Ribosomal_bL9/RNase_H1_N"/>
</dbReference>
<dbReference type="InterPro" id="IPR011320">
    <property type="entry name" value="RNase_H1_N"/>
</dbReference>
<dbReference type="InterPro" id="IPR037056">
    <property type="entry name" value="RNase_H1_N_sf"/>
</dbReference>
<dbReference type="Pfam" id="PF01693">
    <property type="entry name" value="Cauli_VI"/>
    <property type="match status" value="1"/>
</dbReference>
<dbReference type="SUPFAM" id="SSF55658">
    <property type="entry name" value="L9 N-domain-like"/>
    <property type="match status" value="1"/>
</dbReference>
<reference key="1">
    <citation type="journal article" date="1980" name="Cell">
        <title>Nucleotide sequence of cauliflower mosaic virus DNA.</title>
        <authorList>
            <person name="Franck A."/>
            <person name="Guilley H."/>
            <person name="Jonard G."/>
            <person name="Richards K."/>
            <person name="Hirth L."/>
        </authorList>
    </citation>
    <scope>NUCLEOTIDE SEQUENCE [GENOMIC DNA]</scope>
</reference>
<name>IBMP_CAMVS</name>